<protein>
    <recommendedName>
        <fullName evidence="1">DNA mismatch repair protein MutS</fullName>
    </recommendedName>
</protein>
<evidence type="ECO:0000255" key="1">
    <source>
        <dbReference type="HAMAP-Rule" id="MF_00096"/>
    </source>
</evidence>
<evidence type="ECO:0000256" key="2">
    <source>
        <dbReference type="SAM" id="MobiDB-lite"/>
    </source>
</evidence>
<feature type="chain" id="PRO_1000117279" description="DNA mismatch repair protein MutS">
    <location>
        <begin position="1"/>
        <end position="890"/>
    </location>
</feature>
<feature type="region of interest" description="Disordered" evidence="2">
    <location>
        <begin position="832"/>
        <end position="851"/>
    </location>
</feature>
<feature type="binding site" evidence="1">
    <location>
        <begin position="607"/>
        <end position="614"/>
    </location>
    <ligand>
        <name>ATP</name>
        <dbReference type="ChEBI" id="CHEBI:30616"/>
    </ligand>
</feature>
<comment type="function">
    <text evidence="1">This protein is involved in the repair of mismatches in DNA. It is possible that it carries out the mismatch recognition step. This protein has a weak ATPase activity.</text>
</comment>
<comment type="similarity">
    <text evidence="1">Belongs to the DNA mismatch repair MutS family.</text>
</comment>
<reference key="1">
    <citation type="submission" date="2008-10" db="EMBL/GenBank/DDBJ databases">
        <title>Genome sequence of Bacillus cereus B4264.</title>
        <authorList>
            <person name="Dodson R.J."/>
            <person name="Durkin A.S."/>
            <person name="Rosovitz M.J."/>
            <person name="Rasko D.A."/>
            <person name="Hoffmaster A."/>
            <person name="Ravel J."/>
            <person name="Sutton G."/>
        </authorList>
    </citation>
    <scope>NUCLEOTIDE SEQUENCE [LARGE SCALE GENOMIC DNA]</scope>
    <source>
        <strain>B4264</strain>
    </source>
</reference>
<proteinExistence type="inferred from homology"/>
<name>MUTS_BACC4</name>
<dbReference type="EMBL" id="CP001176">
    <property type="protein sequence ID" value="ACK60375.1"/>
    <property type="molecule type" value="Genomic_DNA"/>
</dbReference>
<dbReference type="RefSeq" id="WP_000196026.1">
    <property type="nucleotide sequence ID" value="NZ_VEHB01000002.1"/>
</dbReference>
<dbReference type="SMR" id="B7HDP4"/>
<dbReference type="KEGG" id="bcb:BCB4264_A3868"/>
<dbReference type="HOGENOM" id="CLU_002472_3_1_9"/>
<dbReference type="Proteomes" id="UP000007096">
    <property type="component" value="Chromosome"/>
</dbReference>
<dbReference type="GO" id="GO:0005829">
    <property type="term" value="C:cytosol"/>
    <property type="evidence" value="ECO:0007669"/>
    <property type="project" value="TreeGrafter"/>
</dbReference>
<dbReference type="GO" id="GO:0005524">
    <property type="term" value="F:ATP binding"/>
    <property type="evidence" value="ECO:0007669"/>
    <property type="project" value="UniProtKB-UniRule"/>
</dbReference>
<dbReference type="GO" id="GO:0140664">
    <property type="term" value="F:ATP-dependent DNA damage sensor activity"/>
    <property type="evidence" value="ECO:0007669"/>
    <property type="project" value="InterPro"/>
</dbReference>
<dbReference type="GO" id="GO:0003684">
    <property type="term" value="F:damaged DNA binding"/>
    <property type="evidence" value="ECO:0007669"/>
    <property type="project" value="UniProtKB-UniRule"/>
</dbReference>
<dbReference type="GO" id="GO:0030983">
    <property type="term" value="F:mismatched DNA binding"/>
    <property type="evidence" value="ECO:0007669"/>
    <property type="project" value="InterPro"/>
</dbReference>
<dbReference type="GO" id="GO:0006298">
    <property type="term" value="P:mismatch repair"/>
    <property type="evidence" value="ECO:0007669"/>
    <property type="project" value="UniProtKB-UniRule"/>
</dbReference>
<dbReference type="CDD" id="cd03284">
    <property type="entry name" value="ABC_MutS1"/>
    <property type="match status" value="1"/>
</dbReference>
<dbReference type="FunFam" id="1.10.1420.10:FF:000007">
    <property type="entry name" value="DNA mismatch repair protein MutS"/>
    <property type="match status" value="1"/>
</dbReference>
<dbReference type="FunFam" id="3.30.420.110:FF:000007">
    <property type="entry name" value="DNA mismatch repair protein MutS"/>
    <property type="match status" value="1"/>
</dbReference>
<dbReference type="FunFam" id="3.40.1170.10:FF:000001">
    <property type="entry name" value="DNA mismatch repair protein MutS"/>
    <property type="match status" value="1"/>
</dbReference>
<dbReference type="FunFam" id="3.40.50.300:FF:000896">
    <property type="entry name" value="DNA mismatch repair protein MutS"/>
    <property type="match status" value="1"/>
</dbReference>
<dbReference type="Gene3D" id="1.10.1420.10">
    <property type="match status" value="2"/>
</dbReference>
<dbReference type="Gene3D" id="3.40.1170.10">
    <property type="entry name" value="DNA repair protein MutS, domain I"/>
    <property type="match status" value="1"/>
</dbReference>
<dbReference type="Gene3D" id="3.30.420.110">
    <property type="entry name" value="MutS, connector domain"/>
    <property type="match status" value="1"/>
</dbReference>
<dbReference type="Gene3D" id="3.40.50.300">
    <property type="entry name" value="P-loop containing nucleotide triphosphate hydrolases"/>
    <property type="match status" value="1"/>
</dbReference>
<dbReference type="HAMAP" id="MF_00096">
    <property type="entry name" value="MutS"/>
    <property type="match status" value="1"/>
</dbReference>
<dbReference type="InterPro" id="IPR005748">
    <property type="entry name" value="DNA_mismatch_repair_MutS"/>
</dbReference>
<dbReference type="InterPro" id="IPR007695">
    <property type="entry name" value="DNA_mismatch_repair_MutS-lik_N"/>
</dbReference>
<dbReference type="InterPro" id="IPR017261">
    <property type="entry name" value="DNA_mismatch_repair_MutS/MSH"/>
</dbReference>
<dbReference type="InterPro" id="IPR000432">
    <property type="entry name" value="DNA_mismatch_repair_MutS_C"/>
</dbReference>
<dbReference type="InterPro" id="IPR007861">
    <property type="entry name" value="DNA_mismatch_repair_MutS_clamp"/>
</dbReference>
<dbReference type="InterPro" id="IPR007696">
    <property type="entry name" value="DNA_mismatch_repair_MutS_core"/>
</dbReference>
<dbReference type="InterPro" id="IPR016151">
    <property type="entry name" value="DNA_mismatch_repair_MutS_N"/>
</dbReference>
<dbReference type="InterPro" id="IPR036187">
    <property type="entry name" value="DNA_mismatch_repair_MutS_sf"/>
</dbReference>
<dbReference type="InterPro" id="IPR007860">
    <property type="entry name" value="DNA_mmatch_repair_MutS_con_dom"/>
</dbReference>
<dbReference type="InterPro" id="IPR045076">
    <property type="entry name" value="MutS"/>
</dbReference>
<dbReference type="InterPro" id="IPR036678">
    <property type="entry name" value="MutS_con_dom_sf"/>
</dbReference>
<dbReference type="InterPro" id="IPR027417">
    <property type="entry name" value="P-loop_NTPase"/>
</dbReference>
<dbReference type="NCBIfam" id="TIGR01070">
    <property type="entry name" value="mutS1"/>
    <property type="match status" value="1"/>
</dbReference>
<dbReference type="NCBIfam" id="NF003810">
    <property type="entry name" value="PRK05399.1"/>
    <property type="match status" value="1"/>
</dbReference>
<dbReference type="PANTHER" id="PTHR11361:SF34">
    <property type="entry name" value="DNA MISMATCH REPAIR PROTEIN MSH1, MITOCHONDRIAL"/>
    <property type="match status" value="1"/>
</dbReference>
<dbReference type="PANTHER" id="PTHR11361">
    <property type="entry name" value="DNA MISMATCH REPAIR PROTEIN MUTS FAMILY MEMBER"/>
    <property type="match status" value="1"/>
</dbReference>
<dbReference type="Pfam" id="PF01624">
    <property type="entry name" value="MutS_I"/>
    <property type="match status" value="1"/>
</dbReference>
<dbReference type="Pfam" id="PF05188">
    <property type="entry name" value="MutS_II"/>
    <property type="match status" value="1"/>
</dbReference>
<dbReference type="Pfam" id="PF05192">
    <property type="entry name" value="MutS_III"/>
    <property type="match status" value="1"/>
</dbReference>
<dbReference type="Pfam" id="PF05190">
    <property type="entry name" value="MutS_IV"/>
    <property type="match status" value="1"/>
</dbReference>
<dbReference type="Pfam" id="PF00488">
    <property type="entry name" value="MutS_V"/>
    <property type="match status" value="1"/>
</dbReference>
<dbReference type="PIRSF" id="PIRSF037677">
    <property type="entry name" value="DNA_mis_repair_Msh6"/>
    <property type="match status" value="1"/>
</dbReference>
<dbReference type="SMART" id="SM00534">
    <property type="entry name" value="MUTSac"/>
    <property type="match status" value="1"/>
</dbReference>
<dbReference type="SMART" id="SM00533">
    <property type="entry name" value="MUTSd"/>
    <property type="match status" value="1"/>
</dbReference>
<dbReference type="SUPFAM" id="SSF55271">
    <property type="entry name" value="DNA repair protein MutS, domain I"/>
    <property type="match status" value="1"/>
</dbReference>
<dbReference type="SUPFAM" id="SSF53150">
    <property type="entry name" value="DNA repair protein MutS, domain II"/>
    <property type="match status" value="1"/>
</dbReference>
<dbReference type="SUPFAM" id="SSF48334">
    <property type="entry name" value="DNA repair protein MutS, domain III"/>
    <property type="match status" value="1"/>
</dbReference>
<dbReference type="SUPFAM" id="SSF52540">
    <property type="entry name" value="P-loop containing nucleoside triphosphate hydrolases"/>
    <property type="match status" value="1"/>
</dbReference>
<dbReference type="PROSITE" id="PS00486">
    <property type="entry name" value="DNA_MISMATCH_REPAIR_2"/>
    <property type="match status" value="1"/>
</dbReference>
<accession>B7HDP4</accession>
<organism>
    <name type="scientific">Bacillus cereus (strain B4264)</name>
    <dbReference type="NCBI Taxonomy" id="405532"/>
    <lineage>
        <taxon>Bacteria</taxon>
        <taxon>Bacillati</taxon>
        <taxon>Bacillota</taxon>
        <taxon>Bacilli</taxon>
        <taxon>Bacillales</taxon>
        <taxon>Bacillaceae</taxon>
        <taxon>Bacillus</taxon>
        <taxon>Bacillus cereus group</taxon>
    </lineage>
</organism>
<keyword id="KW-0067">ATP-binding</keyword>
<keyword id="KW-0227">DNA damage</keyword>
<keyword id="KW-0234">DNA repair</keyword>
<keyword id="KW-0238">DNA-binding</keyword>
<keyword id="KW-0547">Nucleotide-binding</keyword>
<gene>
    <name evidence="1" type="primary">mutS</name>
    <name type="ordered locus">BCB4264_A3868</name>
</gene>
<sequence length="890" mass="100872">MTQYTPMIQQYLKVKADYQDAFLFFRLGDFYEMFFEDAVKAAHELEITLTSRDGGSSERIPMCGVPYHAAKNYIEQLVEKGYKVAVCEQVEDPKTAKGVVRREVVQLITPGTMMEGRTIDEKENNFLAALTHFEDGSYALACNDLTTGQNTVTLLTGSVEDILLEVYATGSKEIVVDSSFSKDELNKLTETLKMTISYEDATAIPEGLEHLVKNVSQAKLIKAVGRLFNYVIRTQKRSLDHLQPVEIYYTNQFMKIDVHSKRNLELTETLRTKEKTGSLLWLLDKTKTAMGGRMLKQWMERPLIQKERIEERLEMVETFVNDYFLREDLKEKLKEVYDLERLAGKVAFGNVNARDLLQLRRSLLQVPAILEAISLLDNAYASRLIQGADPCESLTELLGRSIQENPPLSIKDGDIIKDGYNDKLDQYRYVSKNGKTWIAELEKRERDITGIKSLKIGYNRIFGYYIEVTKANLAALPEGRYERKQTLANAERFITDELKEKETLILEAEEKIVQLEYDLFTALREEVKVFIPKLQHLAKVISELDVLQSFATVSEEEQFVKPVLTTKREIFIKDGRHPVVEKVLNGKLYVPNDCIMPENMDVFLITGPNMSGKSTYMRQLALVTVMSQIGCFVPATEAVLPVFDQIFTRIGAADDLISGQSTFMVEMLEAKNAIANASERSLILFDEIGRGTSTYDGMALAQAIIEHIHDQIGAKTLFSTHYHELTVLEESLDQLKNVHVSAIEENGKVVFLHKIQDGAADKSYGIHVAQLAELPDSLIARAKEVLAQLEGQEEIIIPKRVEVKVQEAAPEPVVVKEEIAEIQETKVETEEESQLSFFGGEQSSKKQDKPLLDQKETAVLAQIKKIDLLDMTPLEAMNELYRLQKKLKKG</sequence>